<name>PLLP_DANRE</name>
<proteinExistence type="evidence at transcript level"/>
<dbReference type="EMBL" id="BX571681">
    <property type="status" value="NOT_ANNOTATED_CDS"/>
    <property type="molecule type" value="Genomic_DNA"/>
</dbReference>
<dbReference type="EMBL" id="BX571883">
    <property type="protein sequence ID" value="CAQ13586.1"/>
    <property type="molecule type" value="Genomic_DNA"/>
</dbReference>
<dbReference type="RefSeq" id="NP_001116171.1">
    <property type="nucleotide sequence ID" value="NM_001122699.1"/>
</dbReference>
<dbReference type="RefSeq" id="XP_005159164.1">
    <property type="nucleotide sequence ID" value="XM_005159107.5"/>
</dbReference>
<dbReference type="FunCoup" id="A3KQ86">
    <property type="interactions" value="879"/>
</dbReference>
<dbReference type="STRING" id="7955.ENSDARP00000085527"/>
<dbReference type="PaxDb" id="7955-ENSDARP00000085527"/>
<dbReference type="GeneID" id="558650"/>
<dbReference type="KEGG" id="dre:558650"/>
<dbReference type="AGR" id="ZFIN:ZDB-GENE-050419-195"/>
<dbReference type="CTD" id="51090"/>
<dbReference type="ZFIN" id="ZDB-GENE-050419-195">
    <property type="gene designation" value="pllp"/>
</dbReference>
<dbReference type="eggNOG" id="KOG4788">
    <property type="taxonomic scope" value="Eukaryota"/>
</dbReference>
<dbReference type="HOGENOM" id="CLU_103581_2_0_1"/>
<dbReference type="OMA" id="MYATAFI"/>
<dbReference type="OrthoDB" id="6258237at2759"/>
<dbReference type="TreeFam" id="TF316174"/>
<dbReference type="Proteomes" id="UP000000437">
    <property type="component" value="Alternate scaffold 18"/>
</dbReference>
<dbReference type="Proteomes" id="UP000000437">
    <property type="component" value="Chromosome 18"/>
</dbReference>
<dbReference type="Bgee" id="ENSDARG00000062756">
    <property type="expression patterns" value="Expressed in intestine and 18 other cell types or tissues"/>
</dbReference>
<dbReference type="GO" id="GO:0016324">
    <property type="term" value="C:apical plasma membrane"/>
    <property type="evidence" value="ECO:0000314"/>
    <property type="project" value="UniProtKB"/>
</dbReference>
<dbReference type="GO" id="GO:0005768">
    <property type="term" value="C:endosome"/>
    <property type="evidence" value="ECO:0000314"/>
    <property type="project" value="UniProtKB"/>
</dbReference>
<dbReference type="GO" id="GO:0016020">
    <property type="term" value="C:membrane"/>
    <property type="evidence" value="ECO:0000318"/>
    <property type="project" value="GO_Central"/>
</dbReference>
<dbReference type="GO" id="GO:0043209">
    <property type="term" value="C:myelin sheath"/>
    <property type="evidence" value="ECO:0007669"/>
    <property type="project" value="UniProtKB-SubCell"/>
</dbReference>
<dbReference type="GO" id="GO:0055038">
    <property type="term" value="C:recycling endosome membrane"/>
    <property type="evidence" value="ECO:0007669"/>
    <property type="project" value="UniProtKB-SubCell"/>
</dbReference>
<dbReference type="GO" id="GO:0019911">
    <property type="term" value="F:structural constituent of myelin sheath"/>
    <property type="evidence" value="ECO:0000318"/>
    <property type="project" value="GO_Central"/>
</dbReference>
<dbReference type="GO" id="GO:0048546">
    <property type="term" value="P:digestive tract morphogenesis"/>
    <property type="evidence" value="ECO:0000315"/>
    <property type="project" value="ZFIN"/>
</dbReference>
<dbReference type="GO" id="GO:0006897">
    <property type="term" value="P:endocytosis"/>
    <property type="evidence" value="ECO:0007669"/>
    <property type="project" value="UniProtKB-KW"/>
</dbReference>
<dbReference type="GO" id="GO:0042552">
    <property type="term" value="P:myelination"/>
    <property type="evidence" value="ECO:0000318"/>
    <property type="project" value="GO_Central"/>
</dbReference>
<dbReference type="GO" id="GO:0030100">
    <property type="term" value="P:regulation of endocytosis"/>
    <property type="evidence" value="ECO:0000315"/>
    <property type="project" value="ZFIN"/>
</dbReference>
<dbReference type="InterPro" id="IPR013295">
    <property type="entry name" value="MAL"/>
</dbReference>
<dbReference type="InterPro" id="IPR008253">
    <property type="entry name" value="Marvel"/>
</dbReference>
<dbReference type="InterPro" id="IPR050578">
    <property type="entry name" value="MARVEL-CKLF_proteins"/>
</dbReference>
<dbReference type="PANTHER" id="PTHR22776">
    <property type="entry name" value="MARVEL-CONTAINING POTENTIAL LIPID RAFT-ASSOCIATED PROTEIN"/>
    <property type="match status" value="1"/>
</dbReference>
<dbReference type="PANTHER" id="PTHR22776:SF9">
    <property type="entry name" value="PLASMOLIPIN"/>
    <property type="match status" value="1"/>
</dbReference>
<dbReference type="Pfam" id="PF01284">
    <property type="entry name" value="MARVEL"/>
    <property type="match status" value="1"/>
</dbReference>
<dbReference type="PRINTS" id="PR01884">
    <property type="entry name" value="MALPROTEIN"/>
</dbReference>
<dbReference type="PROSITE" id="PS51225">
    <property type="entry name" value="MARVEL"/>
    <property type="match status" value="1"/>
</dbReference>
<accession>A3KQ86</accession>
<accession>F6NKZ5</accession>
<evidence type="ECO:0000250" key="1">
    <source>
        <dbReference type="UniProtKB" id="P47987"/>
    </source>
</evidence>
<evidence type="ECO:0000250" key="2">
    <source>
        <dbReference type="UniProtKB" id="Q9Y342"/>
    </source>
</evidence>
<evidence type="ECO:0000255" key="3"/>
<evidence type="ECO:0000255" key="4">
    <source>
        <dbReference type="PROSITE-ProRule" id="PRU00581"/>
    </source>
</evidence>
<evidence type="ECO:0000269" key="5">
    <source>
    </source>
</evidence>
<evidence type="ECO:0000305" key="6"/>
<keyword id="KW-1003">Cell membrane</keyword>
<keyword id="KW-0254">Endocytosis</keyword>
<keyword id="KW-0967">Endosome</keyword>
<keyword id="KW-0472">Membrane</keyword>
<keyword id="KW-0597">Phosphoprotein</keyword>
<keyword id="KW-1185">Reference proteome</keyword>
<keyword id="KW-0812">Transmembrane</keyword>
<keyword id="KW-1133">Transmembrane helix</keyword>
<protein>
    <recommendedName>
        <fullName>Plasmolipin</fullName>
    </recommendedName>
    <alternativeName>
        <fullName>Plasma membrane proteolipid</fullName>
    </alternativeName>
</protein>
<organism>
    <name type="scientific">Danio rerio</name>
    <name type="common">Zebrafish</name>
    <name type="synonym">Brachydanio rerio</name>
    <dbReference type="NCBI Taxonomy" id="7955"/>
    <lineage>
        <taxon>Eukaryota</taxon>
        <taxon>Metazoa</taxon>
        <taxon>Chordata</taxon>
        <taxon>Craniata</taxon>
        <taxon>Vertebrata</taxon>
        <taxon>Euteleostomi</taxon>
        <taxon>Actinopterygii</taxon>
        <taxon>Neopterygii</taxon>
        <taxon>Teleostei</taxon>
        <taxon>Ostariophysi</taxon>
        <taxon>Cypriniformes</taxon>
        <taxon>Danionidae</taxon>
        <taxon>Danioninae</taxon>
        <taxon>Danio</taxon>
    </lineage>
</organism>
<sequence>MADFPGKVSTQTSSQEPQRSFAISSSVDMGFIKSIPGILLIAEIVVGLLVWTLIASTPHYLIPALGWVLFVSITLWLLSIALLVILLLSLHQRLPSVPWPLVLLVFYSVAALLYLTAFLANAATVPGGYYQGHLGASAFFGIVETLLYTASSYFAYLGWRGEGQNAAGSTVPV</sequence>
<comment type="function">
    <text evidence="2 5">Main component of the myelin sheath that plays an important role in myelin membrane biogenesis and myelination (By similarity). Plays an essential function in apical endocytosis (PubMed:25706235). Plays an important role by activating the Notch signaling pathway, which is essential for cell differentiation and results in correct patterning of the intestinal epithelium, particularly of the posterior gut absorptive cells (PubMed:25706235).</text>
</comment>
<comment type="subunit">
    <text evidence="2">Forms oligomers.</text>
</comment>
<comment type="subcellular location">
    <subcellularLocation>
        <location evidence="2">Cell membrane</location>
        <topology evidence="3">Multi-pass membrane protein</topology>
    </subcellularLocation>
    <subcellularLocation>
        <location evidence="1">Myelin membrane</location>
        <topology evidence="3">Multi-pass membrane protein</topology>
    </subcellularLocation>
    <subcellularLocation>
        <location evidence="5">Apical cell membrane</location>
        <topology evidence="3">Multi-pass membrane protein</topology>
    </subcellularLocation>
    <subcellularLocation>
        <location evidence="5">Recycling endosome membrane</location>
        <topology evidence="3">Multi-pass membrane protein</topology>
    </subcellularLocation>
    <subcellularLocation>
        <location evidence="5">Vesicle</location>
    </subcellularLocation>
    <text evidence="1 2 5">In polarized cells, localized predominantly in the apical membrane (PubMed:25706235). Located in lipid raft (By similarity). Recycled between the plasma membrane and the Golgi complex (By similarity). PLLP is continuously recirculating in the cell (By similarity).</text>
</comment>
<comment type="tissue specificity">
    <text evidence="5">Expressed in the posterior midgut.</text>
</comment>
<comment type="developmental stage">
    <text evidence="5">Expressed in the hatching gland and the pronephric duct as early as 48 hours post-fertilization (hpf), and is highly enriched in the gut at 72 hpf and 120 hpf.</text>
</comment>
<comment type="disruption phenotype">
    <text evidence="5">Pllp-mutant zebrafish show defects in intestinal absorption, and the intestinal epithelial cells contained enlarged endosomes. The pllp-mutant zebrafish exhibits abnormal apical accumulation of Crb3 in the intestinal epithelium and show reduced Notch signaling and defects in intestinal epithelial differentiation.</text>
</comment>
<comment type="similarity">
    <text evidence="6">Belongs to the MAL family.</text>
</comment>
<feature type="chain" id="PRO_0000461638" description="Plasmolipin">
    <location>
        <begin position="1"/>
        <end position="173"/>
    </location>
</feature>
<feature type="topological domain" description="Cytoplasmic" evidence="6">
    <location>
        <begin position="1"/>
        <end position="34"/>
    </location>
</feature>
<feature type="transmembrane region" description="Helical" evidence="3">
    <location>
        <begin position="35"/>
        <end position="55"/>
    </location>
</feature>
<feature type="topological domain" description="Extracellular" evidence="6">
    <location>
        <begin position="56"/>
        <end position="67"/>
    </location>
</feature>
<feature type="transmembrane region" description="Helical" evidence="3">
    <location>
        <begin position="68"/>
        <end position="88"/>
    </location>
</feature>
<feature type="topological domain" description="Cytoplasmic" evidence="6">
    <location>
        <begin position="89"/>
        <end position="98"/>
    </location>
</feature>
<feature type="transmembrane region" description="Helical" evidence="3">
    <location>
        <begin position="99"/>
        <end position="119"/>
    </location>
</feature>
<feature type="topological domain" description="Extracellular" evidence="6">
    <location>
        <begin position="120"/>
        <end position="138"/>
    </location>
</feature>
<feature type="transmembrane region" description="Helical" evidence="3">
    <location>
        <begin position="139"/>
        <end position="159"/>
    </location>
</feature>
<feature type="topological domain" description="Cytoplasmic" evidence="6">
    <location>
        <begin position="160"/>
        <end position="173"/>
    </location>
</feature>
<feature type="domain" description="MARVEL" evidence="4">
    <location>
        <begin position="31"/>
        <end position="160"/>
    </location>
</feature>
<gene>
    <name type="primary">pllp</name>
    <name type="ORF">si:dkey-73n10.4</name>
</gene>
<reference key="1">
    <citation type="journal article" date="2013" name="Nature">
        <title>The zebrafish reference genome sequence and its relationship to the human genome.</title>
        <authorList>
            <person name="Howe K."/>
            <person name="Clark M.D."/>
            <person name="Torroja C.F."/>
            <person name="Torrance J."/>
            <person name="Berthelot C."/>
            <person name="Muffato M."/>
            <person name="Collins J.E."/>
            <person name="Humphray S."/>
            <person name="McLaren K."/>
            <person name="Matthews L."/>
            <person name="McLaren S."/>
            <person name="Sealy I."/>
            <person name="Caccamo M."/>
            <person name="Churcher C."/>
            <person name="Scott C."/>
            <person name="Barrett J.C."/>
            <person name="Koch R."/>
            <person name="Rauch G.J."/>
            <person name="White S."/>
            <person name="Chow W."/>
            <person name="Kilian B."/>
            <person name="Quintais L.T."/>
            <person name="Guerra-Assuncao J.A."/>
            <person name="Zhou Y."/>
            <person name="Gu Y."/>
            <person name="Yen J."/>
            <person name="Vogel J.H."/>
            <person name="Eyre T."/>
            <person name="Redmond S."/>
            <person name="Banerjee R."/>
            <person name="Chi J."/>
            <person name="Fu B."/>
            <person name="Langley E."/>
            <person name="Maguire S.F."/>
            <person name="Laird G.K."/>
            <person name="Lloyd D."/>
            <person name="Kenyon E."/>
            <person name="Donaldson S."/>
            <person name="Sehra H."/>
            <person name="Almeida-King J."/>
            <person name="Loveland J."/>
            <person name="Trevanion S."/>
            <person name="Jones M."/>
            <person name="Quail M."/>
            <person name="Willey D."/>
            <person name="Hunt A."/>
            <person name="Burton J."/>
            <person name="Sims S."/>
            <person name="McLay K."/>
            <person name="Plumb B."/>
            <person name="Davis J."/>
            <person name="Clee C."/>
            <person name="Oliver K."/>
            <person name="Clark R."/>
            <person name="Riddle C."/>
            <person name="Elliot D."/>
            <person name="Threadgold G."/>
            <person name="Harden G."/>
            <person name="Ware D."/>
            <person name="Begum S."/>
            <person name="Mortimore B."/>
            <person name="Kerry G."/>
            <person name="Heath P."/>
            <person name="Phillimore B."/>
            <person name="Tracey A."/>
            <person name="Corby N."/>
            <person name="Dunn M."/>
            <person name="Johnson C."/>
            <person name="Wood J."/>
            <person name="Clark S."/>
            <person name="Pelan S."/>
            <person name="Griffiths G."/>
            <person name="Smith M."/>
            <person name="Glithero R."/>
            <person name="Howden P."/>
            <person name="Barker N."/>
            <person name="Lloyd C."/>
            <person name="Stevens C."/>
            <person name="Harley J."/>
            <person name="Holt K."/>
            <person name="Panagiotidis G."/>
            <person name="Lovell J."/>
            <person name="Beasley H."/>
            <person name="Henderson C."/>
            <person name="Gordon D."/>
            <person name="Auger K."/>
            <person name="Wright D."/>
            <person name="Collins J."/>
            <person name="Raisen C."/>
            <person name="Dyer L."/>
            <person name="Leung K."/>
            <person name="Robertson L."/>
            <person name="Ambridge K."/>
            <person name="Leongamornlert D."/>
            <person name="McGuire S."/>
            <person name="Gilderthorp R."/>
            <person name="Griffiths C."/>
            <person name="Manthravadi D."/>
            <person name="Nichol S."/>
            <person name="Barker G."/>
            <person name="Whitehead S."/>
            <person name="Kay M."/>
            <person name="Brown J."/>
            <person name="Murnane C."/>
            <person name="Gray E."/>
            <person name="Humphries M."/>
            <person name="Sycamore N."/>
            <person name="Barker D."/>
            <person name="Saunders D."/>
            <person name="Wallis J."/>
            <person name="Babbage A."/>
            <person name="Hammond S."/>
            <person name="Mashreghi-Mohammadi M."/>
            <person name="Barr L."/>
            <person name="Martin S."/>
            <person name="Wray P."/>
            <person name="Ellington A."/>
            <person name="Matthews N."/>
            <person name="Ellwood M."/>
            <person name="Woodmansey R."/>
            <person name="Clark G."/>
            <person name="Cooper J."/>
            <person name="Tromans A."/>
            <person name="Grafham D."/>
            <person name="Skuce C."/>
            <person name="Pandian R."/>
            <person name="Andrews R."/>
            <person name="Harrison E."/>
            <person name="Kimberley A."/>
            <person name="Garnett J."/>
            <person name="Fosker N."/>
            <person name="Hall R."/>
            <person name="Garner P."/>
            <person name="Kelly D."/>
            <person name="Bird C."/>
            <person name="Palmer S."/>
            <person name="Gehring I."/>
            <person name="Berger A."/>
            <person name="Dooley C.M."/>
            <person name="Ersan-Urun Z."/>
            <person name="Eser C."/>
            <person name="Geiger H."/>
            <person name="Geisler M."/>
            <person name="Karotki L."/>
            <person name="Kirn A."/>
            <person name="Konantz J."/>
            <person name="Konantz M."/>
            <person name="Oberlander M."/>
            <person name="Rudolph-Geiger S."/>
            <person name="Teucke M."/>
            <person name="Lanz C."/>
            <person name="Raddatz G."/>
            <person name="Osoegawa K."/>
            <person name="Zhu B."/>
            <person name="Rapp A."/>
            <person name="Widaa S."/>
            <person name="Langford C."/>
            <person name="Yang F."/>
            <person name="Schuster S.C."/>
            <person name="Carter N.P."/>
            <person name="Harrow J."/>
            <person name="Ning Z."/>
            <person name="Herrero J."/>
            <person name="Searle S.M."/>
            <person name="Enright A."/>
            <person name="Geisler R."/>
            <person name="Plasterk R.H."/>
            <person name="Lee C."/>
            <person name="Westerfield M."/>
            <person name="de Jong P.J."/>
            <person name="Zon L.I."/>
            <person name="Postlethwait J.H."/>
            <person name="Nusslein-Volhard C."/>
            <person name="Hubbard T.J."/>
            <person name="Roest Crollius H."/>
            <person name="Rogers J."/>
            <person name="Stemple D.L."/>
        </authorList>
    </citation>
    <scope>NUCLEOTIDE SEQUENCE [LARGE SCALE GENOMIC DNA]</scope>
    <source>
        <strain>Tuebingen</strain>
    </source>
</reference>
<reference key="2">
    <citation type="journal article" date="2015" name="Nat. Cell Biol.">
        <title>Developmental regulation of apical endocytosis controls epithelial patterning in vertebrate tubular organs.</title>
        <authorList>
            <person name="Rodriguez-Fraticelli A.E."/>
            <person name="Bagwell J."/>
            <person name="Bosch-Fortea M."/>
            <person name="Boncompain G."/>
            <person name="Reglero-Real N."/>
            <person name="Garcia-Leon M.J."/>
            <person name="Andres G."/>
            <person name="Toribio M.L."/>
            <person name="Alonso M.A."/>
            <person name="Millan J."/>
            <person name="Perez F."/>
            <person name="Bagnat M."/>
            <person name="Martin-Belmonte F."/>
        </authorList>
    </citation>
    <scope>FUNCTION</scope>
    <scope>SUBCELLULAR LOCATION</scope>
    <scope>DEVELOPMENTAL STAGE</scope>
    <scope>DISRUPTION PHENOTYPE</scope>
    <scope>TISSUE SPECIFICITY</scope>
</reference>